<accession>B7MVD4</accession>
<organism>
    <name type="scientific">Escherichia coli O81 (strain ED1a)</name>
    <dbReference type="NCBI Taxonomy" id="585397"/>
    <lineage>
        <taxon>Bacteria</taxon>
        <taxon>Pseudomonadati</taxon>
        <taxon>Pseudomonadota</taxon>
        <taxon>Gammaproteobacteria</taxon>
        <taxon>Enterobacterales</taxon>
        <taxon>Enterobacteriaceae</taxon>
        <taxon>Escherichia</taxon>
    </lineage>
</organism>
<name>PURR_ECO81</name>
<reference key="1">
    <citation type="journal article" date="2009" name="PLoS Genet.">
        <title>Organised genome dynamics in the Escherichia coli species results in highly diverse adaptive paths.</title>
        <authorList>
            <person name="Touchon M."/>
            <person name="Hoede C."/>
            <person name="Tenaillon O."/>
            <person name="Barbe V."/>
            <person name="Baeriswyl S."/>
            <person name="Bidet P."/>
            <person name="Bingen E."/>
            <person name="Bonacorsi S."/>
            <person name="Bouchier C."/>
            <person name="Bouvet O."/>
            <person name="Calteau A."/>
            <person name="Chiapello H."/>
            <person name="Clermont O."/>
            <person name="Cruveiller S."/>
            <person name="Danchin A."/>
            <person name="Diard M."/>
            <person name="Dossat C."/>
            <person name="Karoui M.E."/>
            <person name="Frapy E."/>
            <person name="Garry L."/>
            <person name="Ghigo J.M."/>
            <person name="Gilles A.M."/>
            <person name="Johnson J."/>
            <person name="Le Bouguenec C."/>
            <person name="Lescat M."/>
            <person name="Mangenot S."/>
            <person name="Martinez-Jehanne V."/>
            <person name="Matic I."/>
            <person name="Nassif X."/>
            <person name="Oztas S."/>
            <person name="Petit M.A."/>
            <person name="Pichon C."/>
            <person name="Rouy Z."/>
            <person name="Ruf C.S."/>
            <person name="Schneider D."/>
            <person name="Tourret J."/>
            <person name="Vacherie B."/>
            <person name="Vallenet D."/>
            <person name="Medigue C."/>
            <person name="Rocha E.P.C."/>
            <person name="Denamur E."/>
        </authorList>
    </citation>
    <scope>NUCLEOTIDE SEQUENCE [LARGE SCALE GENOMIC DNA]</scope>
    <source>
        <strain>ED1a</strain>
    </source>
</reference>
<feature type="chain" id="PRO_1000165215" description="HTH-type transcriptional repressor PurR">
    <location>
        <begin position="1"/>
        <end position="341"/>
    </location>
</feature>
<feature type="domain" description="HTH lacI-type" evidence="1">
    <location>
        <begin position="2"/>
        <end position="56"/>
    </location>
</feature>
<feature type="DNA-binding region" description="H-T-H motif" evidence="1">
    <location>
        <begin position="4"/>
        <end position="23"/>
    </location>
</feature>
<feature type="DNA-binding region" evidence="1">
    <location>
        <begin position="48"/>
        <end position="56"/>
    </location>
</feature>
<feature type="binding site" evidence="1">
    <location>
        <position position="73"/>
    </location>
    <ligand>
        <name>hypoxanthine</name>
        <dbReference type="ChEBI" id="CHEBI:17368"/>
    </ligand>
</feature>
<feature type="binding site" evidence="1">
    <location>
        <position position="190"/>
    </location>
    <ligand>
        <name>hypoxanthine</name>
        <dbReference type="ChEBI" id="CHEBI:17368"/>
    </ligand>
</feature>
<feature type="binding site" evidence="1">
    <location>
        <position position="192"/>
    </location>
    <ligand>
        <name>hypoxanthine</name>
        <dbReference type="ChEBI" id="CHEBI:17368"/>
    </ligand>
</feature>
<feature type="binding site" evidence="1">
    <location>
        <position position="221"/>
    </location>
    <ligand>
        <name>hypoxanthine</name>
        <dbReference type="ChEBI" id="CHEBI:17368"/>
    </ligand>
</feature>
<feature type="binding site" evidence="1">
    <location>
        <position position="275"/>
    </location>
    <ligand>
        <name>hypoxanthine</name>
        <dbReference type="ChEBI" id="CHEBI:17368"/>
    </ligand>
</feature>
<protein>
    <recommendedName>
        <fullName evidence="1">HTH-type transcriptional repressor PurR</fullName>
    </recommendedName>
    <alternativeName>
        <fullName evidence="1">Pur regulon repressor</fullName>
    </alternativeName>
    <alternativeName>
        <fullName evidence="1">Purine nucleotide synthesis repressor</fullName>
    </alternativeName>
</protein>
<evidence type="ECO:0000255" key="1">
    <source>
        <dbReference type="HAMAP-Rule" id="MF_01277"/>
    </source>
</evidence>
<comment type="function">
    <text evidence="1">Is the main repressor of the genes involved in the de novo synthesis of purine nucleotides, regulating purB, purC, purEK, purF, purHD, purL, purMN and guaBA expression. PurR is allosterically activated to bind its cognate DNA by binding the purine corepressors, hypoxanthine or guanine, thereby effecting transcription repression.</text>
</comment>
<comment type="pathway">
    <text>Purine metabolism; purine nucleotide biosynthesis [regulation].</text>
</comment>
<comment type="subunit">
    <text evidence="1">Homodimer.</text>
</comment>
<comment type="domain">
    <text evidence="1">Consists of two structural and functional domains: an N-terminal DNA-binding domain, approximately the first 60 residues, and a larger C-terminal domain, approximately 280 residues, which imparts the function of corepressor binding and oligomerization.</text>
</comment>
<dbReference type="EMBL" id="CU928162">
    <property type="protein sequence ID" value="CAR08050.2"/>
    <property type="molecule type" value="Genomic_DNA"/>
</dbReference>
<dbReference type="RefSeq" id="WP_000190985.1">
    <property type="nucleotide sequence ID" value="NC_011745.1"/>
</dbReference>
<dbReference type="SMR" id="B7MVD4"/>
<dbReference type="KEGG" id="ecq:ECED1_1857"/>
<dbReference type="HOGENOM" id="CLU_037628_6_2_6"/>
<dbReference type="UniPathway" id="UPA00488"/>
<dbReference type="Proteomes" id="UP000000748">
    <property type="component" value="Chromosome"/>
</dbReference>
<dbReference type="GO" id="GO:0003700">
    <property type="term" value="F:DNA-binding transcription factor activity"/>
    <property type="evidence" value="ECO:0007669"/>
    <property type="project" value="TreeGrafter"/>
</dbReference>
<dbReference type="GO" id="GO:0000976">
    <property type="term" value="F:transcription cis-regulatory region binding"/>
    <property type="evidence" value="ECO:0007669"/>
    <property type="project" value="TreeGrafter"/>
</dbReference>
<dbReference type="GO" id="GO:0045892">
    <property type="term" value="P:negative regulation of DNA-templated transcription"/>
    <property type="evidence" value="ECO:0007669"/>
    <property type="project" value="UniProtKB-UniRule"/>
</dbReference>
<dbReference type="GO" id="GO:0006164">
    <property type="term" value="P:purine nucleotide biosynthetic process"/>
    <property type="evidence" value="ECO:0007669"/>
    <property type="project" value="UniProtKB-UniPathway"/>
</dbReference>
<dbReference type="CDD" id="cd01392">
    <property type="entry name" value="HTH_LacI"/>
    <property type="match status" value="1"/>
</dbReference>
<dbReference type="CDD" id="cd06275">
    <property type="entry name" value="PBP1_PurR"/>
    <property type="match status" value="1"/>
</dbReference>
<dbReference type="FunFam" id="1.10.260.40:FF:000002">
    <property type="entry name" value="HTH-type transcriptional repressor PurR"/>
    <property type="match status" value="1"/>
</dbReference>
<dbReference type="FunFam" id="3.40.50.2300:FF:000045">
    <property type="entry name" value="HTH-type transcriptional repressor PurR"/>
    <property type="match status" value="1"/>
</dbReference>
<dbReference type="Gene3D" id="3.40.50.2300">
    <property type="match status" value="2"/>
</dbReference>
<dbReference type="Gene3D" id="1.10.260.40">
    <property type="entry name" value="lambda repressor-like DNA-binding domains"/>
    <property type="match status" value="1"/>
</dbReference>
<dbReference type="HAMAP" id="MF_01277">
    <property type="entry name" value="HTH_type_PurR"/>
    <property type="match status" value="1"/>
</dbReference>
<dbReference type="InterPro" id="IPR000843">
    <property type="entry name" value="HTH_LacI"/>
</dbReference>
<dbReference type="InterPro" id="IPR046335">
    <property type="entry name" value="LacI/GalR-like_sensor"/>
</dbReference>
<dbReference type="InterPro" id="IPR010982">
    <property type="entry name" value="Lambda_DNA-bd_dom_sf"/>
</dbReference>
<dbReference type="InterPro" id="IPR028082">
    <property type="entry name" value="Peripla_BP_I"/>
</dbReference>
<dbReference type="InterPro" id="IPR023588">
    <property type="entry name" value="Tscrpt_reg_HTH_PurR"/>
</dbReference>
<dbReference type="NCBIfam" id="NF007979">
    <property type="entry name" value="PRK10703.1"/>
    <property type="match status" value="1"/>
</dbReference>
<dbReference type="PANTHER" id="PTHR30146:SF148">
    <property type="entry name" value="HTH-TYPE TRANSCRIPTIONAL REPRESSOR PURR-RELATED"/>
    <property type="match status" value="1"/>
</dbReference>
<dbReference type="PANTHER" id="PTHR30146">
    <property type="entry name" value="LACI-RELATED TRANSCRIPTIONAL REPRESSOR"/>
    <property type="match status" value="1"/>
</dbReference>
<dbReference type="Pfam" id="PF00356">
    <property type="entry name" value="LacI"/>
    <property type="match status" value="1"/>
</dbReference>
<dbReference type="Pfam" id="PF13377">
    <property type="entry name" value="Peripla_BP_3"/>
    <property type="match status" value="1"/>
</dbReference>
<dbReference type="PRINTS" id="PR00036">
    <property type="entry name" value="HTHLACI"/>
</dbReference>
<dbReference type="SMART" id="SM00354">
    <property type="entry name" value="HTH_LACI"/>
    <property type="match status" value="1"/>
</dbReference>
<dbReference type="SUPFAM" id="SSF47413">
    <property type="entry name" value="lambda repressor-like DNA-binding domains"/>
    <property type="match status" value="1"/>
</dbReference>
<dbReference type="SUPFAM" id="SSF53822">
    <property type="entry name" value="Periplasmic binding protein-like I"/>
    <property type="match status" value="1"/>
</dbReference>
<dbReference type="PROSITE" id="PS00356">
    <property type="entry name" value="HTH_LACI_1"/>
    <property type="match status" value="1"/>
</dbReference>
<dbReference type="PROSITE" id="PS50932">
    <property type="entry name" value="HTH_LACI_2"/>
    <property type="match status" value="1"/>
</dbReference>
<keyword id="KW-0238">DNA-binding</keyword>
<keyword id="KW-0658">Purine biosynthesis</keyword>
<keyword id="KW-0678">Repressor</keyword>
<keyword id="KW-0804">Transcription</keyword>
<keyword id="KW-0805">Transcription regulation</keyword>
<gene>
    <name evidence="1" type="primary">purR</name>
    <name type="ordered locus">ECED1_1857</name>
</gene>
<sequence length="341" mass="38165">MATIKDVAKRANVSTTTVSHVINKTRFVAEETRNAVWAAIKELHYSPSAVARSLKVNHTKSIGLLATSSEAAYFAEIIEAVEKNCFQKGYTLILGNAWNNLEKQRAYLSMMAQKRVDGLLVMCSEYPEPLLAMLEEYRHIPMVVMDWGEAKADFTDAVIDNAFEGGYMAGRYLIERGHREIGVIPGPLERNTGAGRLAGFMKAMEEAMIKVPESWIVQGDFEPESGYRAMQQILSQSHRPTAVFCGGDIMAMGALCAADEMGLRVPQDVSLIGYDNVRNARYFTPALTTIHQPKDSLGETAFNMLLDRIVNKREEPQSIEVHPRLIERRSVADGPFRDYRR</sequence>
<proteinExistence type="inferred from homology"/>